<name>FKB11_BOVIN</name>
<feature type="signal peptide" evidence="3">
    <location>
        <begin position="1"/>
        <end position="29"/>
    </location>
</feature>
<feature type="chain" id="PRO_0000285595" description="Peptidyl-prolyl cis-trans isomerase FKBP11">
    <location>
        <begin position="30"/>
        <end position="203"/>
    </location>
</feature>
<feature type="transmembrane region" description="Helical" evidence="3">
    <location>
        <begin position="158"/>
        <end position="178"/>
    </location>
</feature>
<feature type="domain" description="PPIase FKBP-type" evidence="4">
    <location>
        <begin position="59"/>
        <end position="146"/>
    </location>
</feature>
<protein>
    <recommendedName>
        <fullName>Peptidyl-prolyl cis-trans isomerase FKBP11</fullName>
        <shortName>PPIase FKBP11</shortName>
        <ecNumber>5.2.1.8</ecNumber>
    </recommendedName>
    <alternativeName>
        <fullName>FK506-binding protein 11</fullName>
        <shortName>FKBP-11</shortName>
    </alternativeName>
    <alternativeName>
        <fullName>Rotamase</fullName>
    </alternativeName>
</protein>
<evidence type="ECO:0000250" key="1"/>
<evidence type="ECO:0000250" key="2">
    <source>
        <dbReference type="UniProtKB" id="Q9D1M7"/>
    </source>
</evidence>
<evidence type="ECO:0000255" key="3"/>
<evidence type="ECO:0000255" key="4">
    <source>
        <dbReference type="PROSITE-ProRule" id="PRU00277"/>
    </source>
</evidence>
<evidence type="ECO:0000305" key="5"/>
<sequence>MTLRPSLLPLRLLLLLLLLLRGAVCQAEAGSETESPVRTLQVETLVEPPEPCAEPATFGDTLHIHYSGSLVDGRIFDTSLTRDPLVIELGQKQVIPGLEQSLLDMCVGEKRRVIIPSHLAYGKRGFPPSIPADAELHFDVELIALIRANYWQKLVKGILPLVGMAMVPALLGLIGYHLYRKASSPKISKNKLKEEKRNKSKKK</sequence>
<proteinExistence type="evidence at transcript level"/>
<organism>
    <name type="scientific">Bos taurus</name>
    <name type="common">Bovine</name>
    <dbReference type="NCBI Taxonomy" id="9913"/>
    <lineage>
        <taxon>Eukaryota</taxon>
        <taxon>Metazoa</taxon>
        <taxon>Chordata</taxon>
        <taxon>Craniata</taxon>
        <taxon>Vertebrata</taxon>
        <taxon>Euteleostomi</taxon>
        <taxon>Mammalia</taxon>
        <taxon>Eutheria</taxon>
        <taxon>Laurasiatheria</taxon>
        <taxon>Artiodactyla</taxon>
        <taxon>Ruminantia</taxon>
        <taxon>Pecora</taxon>
        <taxon>Bovidae</taxon>
        <taxon>Bovinae</taxon>
        <taxon>Bos</taxon>
    </lineage>
</organism>
<gene>
    <name type="primary">FKBP11</name>
</gene>
<dbReference type="EC" id="5.2.1.8"/>
<dbReference type="EMBL" id="BC110165">
    <property type="protein sequence ID" value="AAI10166.1"/>
    <property type="molecule type" value="mRNA"/>
</dbReference>
<dbReference type="RefSeq" id="NP_001039397.1">
    <property type="nucleotide sequence ID" value="NM_001045932.1"/>
</dbReference>
<dbReference type="SMR" id="Q2YDL5"/>
<dbReference type="FunCoup" id="Q2YDL5">
    <property type="interactions" value="109"/>
</dbReference>
<dbReference type="STRING" id="9913.ENSBTAP00000062623"/>
<dbReference type="PaxDb" id="9913-ENSBTAP00000021025"/>
<dbReference type="PeptideAtlas" id="Q2YDL5"/>
<dbReference type="GeneID" id="506043"/>
<dbReference type="KEGG" id="bta:506043"/>
<dbReference type="CTD" id="51303"/>
<dbReference type="eggNOG" id="KOG0549">
    <property type="taxonomic scope" value="Eukaryota"/>
</dbReference>
<dbReference type="InParanoid" id="Q2YDL5"/>
<dbReference type="OrthoDB" id="1902587at2759"/>
<dbReference type="Proteomes" id="UP000009136">
    <property type="component" value="Unplaced"/>
</dbReference>
<dbReference type="GO" id="GO:0005783">
    <property type="term" value="C:endoplasmic reticulum"/>
    <property type="evidence" value="ECO:0000318"/>
    <property type="project" value="GO_Central"/>
</dbReference>
<dbReference type="GO" id="GO:0016020">
    <property type="term" value="C:membrane"/>
    <property type="evidence" value="ECO:0007669"/>
    <property type="project" value="UniProtKB-SubCell"/>
</dbReference>
<dbReference type="GO" id="GO:0003755">
    <property type="term" value="F:peptidyl-prolyl cis-trans isomerase activity"/>
    <property type="evidence" value="ECO:0000318"/>
    <property type="project" value="GO_Central"/>
</dbReference>
<dbReference type="GO" id="GO:0061077">
    <property type="term" value="P:chaperone-mediated protein folding"/>
    <property type="evidence" value="ECO:0007669"/>
    <property type="project" value="InterPro"/>
</dbReference>
<dbReference type="FunFam" id="3.10.50.40:FF:000048">
    <property type="entry name" value="Peptidylprolyl isomerase"/>
    <property type="match status" value="1"/>
</dbReference>
<dbReference type="Gene3D" id="3.10.50.40">
    <property type="match status" value="1"/>
</dbReference>
<dbReference type="InterPro" id="IPR044609">
    <property type="entry name" value="FKBP2/11"/>
</dbReference>
<dbReference type="InterPro" id="IPR046357">
    <property type="entry name" value="PPIase_dom_sf"/>
</dbReference>
<dbReference type="InterPro" id="IPR001179">
    <property type="entry name" value="PPIase_FKBP_dom"/>
</dbReference>
<dbReference type="PANTHER" id="PTHR45779:SF2">
    <property type="entry name" value="PEPTIDYL-PROLYL CIS-TRANS ISOMERASE FKBP11"/>
    <property type="match status" value="1"/>
</dbReference>
<dbReference type="PANTHER" id="PTHR45779">
    <property type="entry name" value="PEPTIDYLPROLYL ISOMERASE"/>
    <property type="match status" value="1"/>
</dbReference>
<dbReference type="Pfam" id="PF00254">
    <property type="entry name" value="FKBP_C"/>
    <property type="match status" value="1"/>
</dbReference>
<dbReference type="SUPFAM" id="SSF54534">
    <property type="entry name" value="FKBP-like"/>
    <property type="match status" value="1"/>
</dbReference>
<dbReference type="PROSITE" id="PS50059">
    <property type="entry name" value="FKBP_PPIASE"/>
    <property type="match status" value="1"/>
</dbReference>
<keyword id="KW-0413">Isomerase</keyword>
<keyword id="KW-0472">Membrane</keyword>
<keyword id="KW-1185">Reference proteome</keyword>
<keyword id="KW-0697">Rotamase</keyword>
<keyword id="KW-0732">Signal</keyword>
<keyword id="KW-0812">Transmembrane</keyword>
<keyword id="KW-1133">Transmembrane helix</keyword>
<comment type="function">
    <text evidence="1">PPIases accelerate the folding of proteins during protein synthesis.</text>
</comment>
<comment type="catalytic activity">
    <reaction>
        <text>[protein]-peptidylproline (omega=180) = [protein]-peptidylproline (omega=0)</text>
        <dbReference type="Rhea" id="RHEA:16237"/>
        <dbReference type="Rhea" id="RHEA-COMP:10747"/>
        <dbReference type="Rhea" id="RHEA-COMP:10748"/>
        <dbReference type="ChEBI" id="CHEBI:83833"/>
        <dbReference type="ChEBI" id="CHEBI:83834"/>
        <dbReference type="EC" id="5.2.1.8"/>
    </reaction>
</comment>
<comment type="subunit">
    <text evidence="2">Interacts with IFITM5.</text>
</comment>
<comment type="subcellular location">
    <subcellularLocation>
        <location evidence="5">Membrane</location>
        <topology evidence="5">Single-pass membrane protein</topology>
    </subcellularLocation>
</comment>
<comment type="similarity">
    <text evidence="5">Belongs to the FKBP-type PPIase family.</text>
</comment>
<reference key="1">
    <citation type="submission" date="2005-11" db="EMBL/GenBank/DDBJ databases">
        <authorList>
            <consortium name="NIH - Mammalian Gene Collection (MGC) project"/>
        </authorList>
    </citation>
    <scope>NUCLEOTIDE SEQUENCE [LARGE SCALE MRNA]</scope>
    <source>
        <strain>Crossbred X Angus</strain>
        <tissue>Liver</tissue>
    </source>
</reference>
<accession>Q2YDL5</accession>